<reference key="1">
    <citation type="journal article" date="2005" name="Genome Res.">
        <title>The Chlamydophila abortus genome sequence reveals an array of variable proteins that contribute to interspecies variation.</title>
        <authorList>
            <person name="Thomson N.R."/>
            <person name="Yeats C."/>
            <person name="Bell K."/>
            <person name="Holden M.T.G."/>
            <person name="Bentley S.D."/>
            <person name="Livingstone M."/>
            <person name="Cerdeno-Tarraga A.-M."/>
            <person name="Harris B."/>
            <person name="Doggett J."/>
            <person name="Ormond D."/>
            <person name="Mungall K."/>
            <person name="Clarke K."/>
            <person name="Feltwell T."/>
            <person name="Hance Z."/>
            <person name="Sanders M."/>
            <person name="Quail M.A."/>
            <person name="Price C."/>
            <person name="Barrell B.G."/>
            <person name="Parkhill J."/>
            <person name="Longbottom D."/>
        </authorList>
    </citation>
    <scope>NUCLEOTIDE SEQUENCE [LARGE SCALE GENOMIC DNA]</scope>
    <source>
        <strain>DSM 27085 / S26/3</strain>
    </source>
</reference>
<sequence length="403" mass="43302">MDRLTVRELSPEEKKVLVRVDFNVPIKDGKILDDIRIRSAMPTIHYLLQKRAAVILMSHLGRPQGKGFEEKYSLQPVVEVLEGYLGHHVPLAPDCVGEVARQAVAQISPGRVLLLENLRFHPGEEHPEEHPAFAAELSSYGDFYVNDAFGTSHRKHASVYTVPQAFPGRSAAGLLMEKELEFLGQHLLISPKRPFTAILGGSKVSSKIGVIEALLSQVDNLLLAGGMGFTFLKALGKSVGNSLVEESGIELARRVLHIAQQRNVRIVLPIDVKVAKACTPAVSWTEVSIDQGIPQDLEGLDIGTKTVQEFCKIIDASSTIFWNGPVGVYEVPPFDQGSMAIANCLARHPSAITVVGGGDAAAVVALAGCTAQVSHVSTGGGASLEFLEKGFLPGTEVLSPSQE</sequence>
<keyword id="KW-0067">ATP-binding</keyword>
<keyword id="KW-0963">Cytoplasm</keyword>
<keyword id="KW-0324">Glycolysis</keyword>
<keyword id="KW-0418">Kinase</keyword>
<keyword id="KW-0547">Nucleotide-binding</keyword>
<keyword id="KW-0808">Transferase</keyword>
<protein>
    <recommendedName>
        <fullName evidence="1">Phosphoglycerate kinase</fullName>
        <ecNumber evidence="1">2.7.2.3</ecNumber>
    </recommendedName>
</protein>
<feature type="chain" id="PRO_1000057974" description="Phosphoglycerate kinase">
    <location>
        <begin position="1"/>
        <end position="403"/>
    </location>
</feature>
<feature type="binding site" evidence="1">
    <location>
        <begin position="21"/>
        <end position="23"/>
    </location>
    <ligand>
        <name>substrate</name>
    </ligand>
</feature>
<feature type="binding site" evidence="1">
    <location>
        <position position="36"/>
    </location>
    <ligand>
        <name>substrate</name>
    </ligand>
</feature>
<feature type="binding site" evidence="1">
    <location>
        <begin position="59"/>
        <end position="62"/>
    </location>
    <ligand>
        <name>substrate</name>
    </ligand>
</feature>
<feature type="binding site" evidence="1">
    <location>
        <position position="119"/>
    </location>
    <ligand>
        <name>substrate</name>
    </ligand>
</feature>
<feature type="binding site" evidence="1">
    <location>
        <position position="154"/>
    </location>
    <ligand>
        <name>substrate</name>
    </ligand>
</feature>
<feature type="binding site" evidence="1">
    <location>
        <position position="207"/>
    </location>
    <ligand>
        <name>ATP</name>
        <dbReference type="ChEBI" id="CHEBI:30616"/>
    </ligand>
</feature>
<feature type="binding site" evidence="1">
    <location>
        <position position="299"/>
    </location>
    <ligand>
        <name>ATP</name>
        <dbReference type="ChEBI" id="CHEBI:30616"/>
    </ligand>
</feature>
<feature type="binding site" evidence="1">
    <location>
        <position position="330"/>
    </location>
    <ligand>
        <name>ATP</name>
        <dbReference type="ChEBI" id="CHEBI:30616"/>
    </ligand>
</feature>
<feature type="binding site" evidence="1">
    <location>
        <begin position="357"/>
        <end position="360"/>
    </location>
    <ligand>
        <name>ATP</name>
        <dbReference type="ChEBI" id="CHEBI:30616"/>
    </ligand>
</feature>
<accession>Q5L748</accession>
<organism>
    <name type="scientific">Chlamydia abortus (strain DSM 27085 / S26/3)</name>
    <name type="common">Chlamydophila abortus</name>
    <dbReference type="NCBI Taxonomy" id="218497"/>
    <lineage>
        <taxon>Bacteria</taxon>
        <taxon>Pseudomonadati</taxon>
        <taxon>Chlamydiota</taxon>
        <taxon>Chlamydiia</taxon>
        <taxon>Chlamydiales</taxon>
        <taxon>Chlamydiaceae</taxon>
        <taxon>Chlamydia/Chlamydophila group</taxon>
        <taxon>Chlamydia</taxon>
    </lineage>
</organism>
<comment type="catalytic activity">
    <reaction evidence="1">
        <text>(2R)-3-phosphoglycerate + ATP = (2R)-3-phospho-glyceroyl phosphate + ADP</text>
        <dbReference type="Rhea" id="RHEA:14801"/>
        <dbReference type="ChEBI" id="CHEBI:30616"/>
        <dbReference type="ChEBI" id="CHEBI:57604"/>
        <dbReference type="ChEBI" id="CHEBI:58272"/>
        <dbReference type="ChEBI" id="CHEBI:456216"/>
        <dbReference type="EC" id="2.7.2.3"/>
    </reaction>
</comment>
<comment type="pathway">
    <text evidence="1">Carbohydrate degradation; glycolysis; pyruvate from D-glyceraldehyde 3-phosphate: step 2/5.</text>
</comment>
<comment type="subunit">
    <text evidence="1">Monomer.</text>
</comment>
<comment type="subcellular location">
    <subcellularLocation>
        <location evidence="1">Cytoplasm</location>
    </subcellularLocation>
</comment>
<comment type="similarity">
    <text evidence="1">Belongs to the phosphoglycerate kinase family.</text>
</comment>
<evidence type="ECO:0000255" key="1">
    <source>
        <dbReference type="HAMAP-Rule" id="MF_00145"/>
    </source>
</evidence>
<gene>
    <name evidence="1" type="primary">pgk</name>
    <name type="ordered locus">CAB062</name>
</gene>
<dbReference type="EC" id="2.7.2.3" evidence="1"/>
<dbReference type="EMBL" id="CR848038">
    <property type="protein sequence ID" value="CAH63520.1"/>
    <property type="molecule type" value="Genomic_DNA"/>
</dbReference>
<dbReference type="RefSeq" id="WP_011096805.1">
    <property type="nucleotide sequence ID" value="NC_004552.2"/>
</dbReference>
<dbReference type="SMR" id="Q5L748"/>
<dbReference type="GeneID" id="93024607"/>
<dbReference type="KEGG" id="cab:CAB062"/>
<dbReference type="eggNOG" id="COG0126">
    <property type="taxonomic scope" value="Bacteria"/>
</dbReference>
<dbReference type="HOGENOM" id="CLU_025427_0_2_0"/>
<dbReference type="OrthoDB" id="9808460at2"/>
<dbReference type="UniPathway" id="UPA00109">
    <property type="reaction ID" value="UER00185"/>
</dbReference>
<dbReference type="Proteomes" id="UP000001012">
    <property type="component" value="Chromosome"/>
</dbReference>
<dbReference type="GO" id="GO:0005829">
    <property type="term" value="C:cytosol"/>
    <property type="evidence" value="ECO:0007669"/>
    <property type="project" value="TreeGrafter"/>
</dbReference>
<dbReference type="GO" id="GO:0043531">
    <property type="term" value="F:ADP binding"/>
    <property type="evidence" value="ECO:0007669"/>
    <property type="project" value="TreeGrafter"/>
</dbReference>
<dbReference type="GO" id="GO:0005524">
    <property type="term" value="F:ATP binding"/>
    <property type="evidence" value="ECO:0007669"/>
    <property type="project" value="UniProtKB-KW"/>
</dbReference>
<dbReference type="GO" id="GO:0004618">
    <property type="term" value="F:phosphoglycerate kinase activity"/>
    <property type="evidence" value="ECO:0007669"/>
    <property type="project" value="UniProtKB-UniRule"/>
</dbReference>
<dbReference type="GO" id="GO:0006094">
    <property type="term" value="P:gluconeogenesis"/>
    <property type="evidence" value="ECO:0007669"/>
    <property type="project" value="TreeGrafter"/>
</dbReference>
<dbReference type="GO" id="GO:0006096">
    <property type="term" value="P:glycolytic process"/>
    <property type="evidence" value="ECO:0007669"/>
    <property type="project" value="UniProtKB-UniRule"/>
</dbReference>
<dbReference type="CDD" id="cd00318">
    <property type="entry name" value="Phosphoglycerate_kinase"/>
    <property type="match status" value="1"/>
</dbReference>
<dbReference type="FunFam" id="3.40.50.1260:FF:000007">
    <property type="entry name" value="Phosphoglycerate kinase"/>
    <property type="match status" value="1"/>
</dbReference>
<dbReference type="FunFam" id="3.40.50.1260:FF:000011">
    <property type="entry name" value="Phosphoglycerate kinase"/>
    <property type="match status" value="1"/>
</dbReference>
<dbReference type="Gene3D" id="3.40.50.1260">
    <property type="entry name" value="Phosphoglycerate kinase, N-terminal domain"/>
    <property type="match status" value="2"/>
</dbReference>
<dbReference type="HAMAP" id="MF_00145">
    <property type="entry name" value="Phosphoglyc_kinase"/>
    <property type="match status" value="1"/>
</dbReference>
<dbReference type="InterPro" id="IPR001576">
    <property type="entry name" value="Phosphoglycerate_kinase"/>
</dbReference>
<dbReference type="InterPro" id="IPR015911">
    <property type="entry name" value="Phosphoglycerate_kinase_CS"/>
</dbReference>
<dbReference type="InterPro" id="IPR015824">
    <property type="entry name" value="Phosphoglycerate_kinase_N"/>
</dbReference>
<dbReference type="InterPro" id="IPR036043">
    <property type="entry name" value="Phosphoglycerate_kinase_sf"/>
</dbReference>
<dbReference type="PANTHER" id="PTHR11406">
    <property type="entry name" value="PHOSPHOGLYCERATE KINASE"/>
    <property type="match status" value="1"/>
</dbReference>
<dbReference type="PANTHER" id="PTHR11406:SF23">
    <property type="entry name" value="PHOSPHOGLYCERATE KINASE 1, CHLOROPLASTIC-RELATED"/>
    <property type="match status" value="1"/>
</dbReference>
<dbReference type="Pfam" id="PF00162">
    <property type="entry name" value="PGK"/>
    <property type="match status" value="1"/>
</dbReference>
<dbReference type="PIRSF" id="PIRSF000724">
    <property type="entry name" value="Pgk"/>
    <property type="match status" value="1"/>
</dbReference>
<dbReference type="PRINTS" id="PR00477">
    <property type="entry name" value="PHGLYCKINASE"/>
</dbReference>
<dbReference type="SUPFAM" id="SSF53748">
    <property type="entry name" value="Phosphoglycerate kinase"/>
    <property type="match status" value="1"/>
</dbReference>
<dbReference type="PROSITE" id="PS00111">
    <property type="entry name" value="PGLYCERATE_KINASE"/>
    <property type="match status" value="1"/>
</dbReference>
<proteinExistence type="inferred from homology"/>
<name>PGK_CHLAB</name>